<protein>
    <recommendedName>
        <fullName evidence="1">LexA repressor</fullName>
        <ecNumber evidence="1">3.4.21.88</ecNumber>
    </recommendedName>
</protein>
<proteinExistence type="inferred from homology"/>
<gene>
    <name evidence="1" type="primary">lexA</name>
    <name type="ordered locus">Mkms_2214</name>
</gene>
<feature type="chain" id="PRO_0000322747" description="LexA repressor">
    <location>
        <begin position="1"/>
        <end position="230"/>
    </location>
</feature>
<feature type="DNA-binding region" description="H-T-H motif" evidence="1">
    <location>
        <begin position="44"/>
        <end position="64"/>
    </location>
</feature>
<feature type="region of interest" description="Disordered" evidence="2">
    <location>
        <begin position="1"/>
        <end position="21"/>
    </location>
</feature>
<feature type="active site" description="For autocatalytic cleavage activity" evidence="1">
    <location>
        <position position="154"/>
    </location>
</feature>
<feature type="active site" description="For autocatalytic cleavage activity" evidence="1">
    <location>
        <position position="191"/>
    </location>
</feature>
<feature type="site" description="Cleavage; by autolysis" evidence="1">
    <location>
        <begin position="119"/>
        <end position="120"/>
    </location>
</feature>
<comment type="function">
    <text evidence="1">Represses a number of genes involved in the response to DNA damage (SOS response), including recA and lexA. In the presence of single-stranded DNA, RecA interacts with LexA causing an autocatalytic cleavage which disrupts the DNA-binding part of LexA, leading to derepression of the SOS regulon and eventually DNA repair.</text>
</comment>
<comment type="catalytic activity">
    <reaction evidence="1">
        <text>Hydrolysis of Ala-|-Gly bond in repressor LexA.</text>
        <dbReference type="EC" id="3.4.21.88"/>
    </reaction>
</comment>
<comment type="subunit">
    <text evidence="1">Homodimer.</text>
</comment>
<comment type="similarity">
    <text evidence="1">Belongs to the peptidase S24 family.</text>
</comment>
<dbReference type="EC" id="3.4.21.88" evidence="1"/>
<dbReference type="EMBL" id="CP000518">
    <property type="protein sequence ID" value="ABL91412.1"/>
    <property type="molecule type" value="Genomic_DNA"/>
</dbReference>
<dbReference type="SMR" id="A1UF04"/>
<dbReference type="STRING" id="189918.Mkms_2214"/>
<dbReference type="MEROPS" id="S24.001"/>
<dbReference type="KEGG" id="mkm:Mkms_2214"/>
<dbReference type="HOGENOM" id="CLU_066192_45_0_11"/>
<dbReference type="OrthoDB" id="9802364at2"/>
<dbReference type="GO" id="GO:0003677">
    <property type="term" value="F:DNA binding"/>
    <property type="evidence" value="ECO:0007669"/>
    <property type="project" value="UniProtKB-UniRule"/>
</dbReference>
<dbReference type="GO" id="GO:0004252">
    <property type="term" value="F:serine-type endopeptidase activity"/>
    <property type="evidence" value="ECO:0007669"/>
    <property type="project" value="UniProtKB-UniRule"/>
</dbReference>
<dbReference type="GO" id="GO:0006281">
    <property type="term" value="P:DNA repair"/>
    <property type="evidence" value="ECO:0007669"/>
    <property type="project" value="UniProtKB-UniRule"/>
</dbReference>
<dbReference type="GO" id="GO:0006260">
    <property type="term" value="P:DNA replication"/>
    <property type="evidence" value="ECO:0007669"/>
    <property type="project" value="UniProtKB-UniRule"/>
</dbReference>
<dbReference type="GO" id="GO:0045892">
    <property type="term" value="P:negative regulation of DNA-templated transcription"/>
    <property type="evidence" value="ECO:0007669"/>
    <property type="project" value="UniProtKB-UniRule"/>
</dbReference>
<dbReference type="GO" id="GO:0006508">
    <property type="term" value="P:proteolysis"/>
    <property type="evidence" value="ECO:0007669"/>
    <property type="project" value="InterPro"/>
</dbReference>
<dbReference type="GO" id="GO:0009432">
    <property type="term" value="P:SOS response"/>
    <property type="evidence" value="ECO:0007669"/>
    <property type="project" value="UniProtKB-UniRule"/>
</dbReference>
<dbReference type="CDD" id="cd06529">
    <property type="entry name" value="S24_LexA-like"/>
    <property type="match status" value="1"/>
</dbReference>
<dbReference type="FunFam" id="1.10.10.10:FF:000009">
    <property type="entry name" value="LexA repressor"/>
    <property type="match status" value="1"/>
</dbReference>
<dbReference type="FunFam" id="2.10.109.10:FF:000001">
    <property type="entry name" value="LexA repressor"/>
    <property type="match status" value="1"/>
</dbReference>
<dbReference type="Gene3D" id="2.10.109.10">
    <property type="entry name" value="Umud Fragment, subunit A"/>
    <property type="match status" value="1"/>
</dbReference>
<dbReference type="Gene3D" id="1.10.10.10">
    <property type="entry name" value="Winged helix-like DNA-binding domain superfamily/Winged helix DNA-binding domain"/>
    <property type="match status" value="1"/>
</dbReference>
<dbReference type="HAMAP" id="MF_00015">
    <property type="entry name" value="LexA"/>
    <property type="match status" value="1"/>
</dbReference>
<dbReference type="InterPro" id="IPR006200">
    <property type="entry name" value="LexA"/>
</dbReference>
<dbReference type="InterPro" id="IPR039418">
    <property type="entry name" value="LexA-like"/>
</dbReference>
<dbReference type="InterPro" id="IPR036286">
    <property type="entry name" value="LexA/Signal_pep-like_sf"/>
</dbReference>
<dbReference type="InterPro" id="IPR006199">
    <property type="entry name" value="LexA_DNA-bd_dom"/>
</dbReference>
<dbReference type="InterPro" id="IPR050077">
    <property type="entry name" value="LexA_repressor"/>
</dbReference>
<dbReference type="InterPro" id="IPR006197">
    <property type="entry name" value="Peptidase_S24_LexA"/>
</dbReference>
<dbReference type="InterPro" id="IPR015927">
    <property type="entry name" value="Peptidase_S24_S26A/B/C"/>
</dbReference>
<dbReference type="InterPro" id="IPR036388">
    <property type="entry name" value="WH-like_DNA-bd_sf"/>
</dbReference>
<dbReference type="InterPro" id="IPR036390">
    <property type="entry name" value="WH_DNA-bd_sf"/>
</dbReference>
<dbReference type="NCBIfam" id="TIGR00498">
    <property type="entry name" value="lexA"/>
    <property type="match status" value="1"/>
</dbReference>
<dbReference type="PANTHER" id="PTHR33516">
    <property type="entry name" value="LEXA REPRESSOR"/>
    <property type="match status" value="1"/>
</dbReference>
<dbReference type="PANTHER" id="PTHR33516:SF2">
    <property type="entry name" value="LEXA REPRESSOR-RELATED"/>
    <property type="match status" value="1"/>
</dbReference>
<dbReference type="Pfam" id="PF01726">
    <property type="entry name" value="LexA_DNA_bind"/>
    <property type="match status" value="1"/>
</dbReference>
<dbReference type="Pfam" id="PF00717">
    <property type="entry name" value="Peptidase_S24"/>
    <property type="match status" value="1"/>
</dbReference>
<dbReference type="PRINTS" id="PR00726">
    <property type="entry name" value="LEXASERPTASE"/>
</dbReference>
<dbReference type="SUPFAM" id="SSF51306">
    <property type="entry name" value="LexA/Signal peptidase"/>
    <property type="match status" value="1"/>
</dbReference>
<dbReference type="SUPFAM" id="SSF46785">
    <property type="entry name" value="Winged helix' DNA-binding domain"/>
    <property type="match status" value="1"/>
</dbReference>
<sequence length="230" mass="24560">MSDDSSETRTGGRRGADAGLTERQRTILEVIRASVTSRGYPPSIREIGDAVGLTSTSSVAHQLRTLERKGYLRRDPNRPRAVDVRLSDEPATPVVTTDVAGSDALPEPTFVPVLGRIAAGGPILAEEAVEDVFPLPRELVGEGSLFLLKVVGDSMVDAAICDGDWVVVRQQAVADNGDIVAAMIDGEATVKTFKRSRGQVWLMPHNPAFEPIPGNDAAVLGKVVTVIRKI</sequence>
<reference key="1">
    <citation type="submission" date="2006-12" db="EMBL/GenBank/DDBJ databases">
        <title>Complete sequence of chromosome of Mycobacterium sp. KMS.</title>
        <authorList>
            <consortium name="US DOE Joint Genome Institute"/>
            <person name="Copeland A."/>
            <person name="Lucas S."/>
            <person name="Lapidus A."/>
            <person name="Barry K."/>
            <person name="Detter J.C."/>
            <person name="Glavina del Rio T."/>
            <person name="Hammon N."/>
            <person name="Israni S."/>
            <person name="Dalin E."/>
            <person name="Tice H."/>
            <person name="Pitluck S."/>
            <person name="Kiss H."/>
            <person name="Brettin T."/>
            <person name="Bruce D."/>
            <person name="Han C."/>
            <person name="Tapia R."/>
            <person name="Gilna P."/>
            <person name="Schmutz J."/>
            <person name="Larimer F."/>
            <person name="Land M."/>
            <person name="Hauser L."/>
            <person name="Kyrpides N."/>
            <person name="Mikhailova N."/>
            <person name="Miller C.D."/>
            <person name="Richardson P."/>
        </authorList>
    </citation>
    <scope>NUCLEOTIDE SEQUENCE [LARGE SCALE GENOMIC DNA]</scope>
    <source>
        <strain>KMS</strain>
    </source>
</reference>
<organism>
    <name type="scientific">Mycobacterium sp. (strain KMS)</name>
    <dbReference type="NCBI Taxonomy" id="189918"/>
    <lineage>
        <taxon>Bacteria</taxon>
        <taxon>Bacillati</taxon>
        <taxon>Actinomycetota</taxon>
        <taxon>Actinomycetes</taxon>
        <taxon>Mycobacteriales</taxon>
        <taxon>Mycobacteriaceae</taxon>
        <taxon>Mycobacterium</taxon>
    </lineage>
</organism>
<name>LEXA_MYCSK</name>
<keyword id="KW-0068">Autocatalytic cleavage</keyword>
<keyword id="KW-0227">DNA damage</keyword>
<keyword id="KW-0234">DNA repair</keyword>
<keyword id="KW-0235">DNA replication</keyword>
<keyword id="KW-0238">DNA-binding</keyword>
<keyword id="KW-0378">Hydrolase</keyword>
<keyword id="KW-0678">Repressor</keyword>
<keyword id="KW-0742">SOS response</keyword>
<keyword id="KW-0804">Transcription</keyword>
<keyword id="KW-0805">Transcription regulation</keyword>
<evidence type="ECO:0000255" key="1">
    <source>
        <dbReference type="HAMAP-Rule" id="MF_00015"/>
    </source>
</evidence>
<evidence type="ECO:0000256" key="2">
    <source>
        <dbReference type="SAM" id="MobiDB-lite"/>
    </source>
</evidence>
<accession>A1UF04</accession>